<proteinExistence type="inferred from homology"/>
<feature type="chain" id="PRO_0000160368" description="ATP-dependent Clp protease ATP-binding subunit ClpX">
    <location>
        <begin position="1"/>
        <end position="421"/>
    </location>
</feature>
<feature type="domain" description="ClpX-type ZB" evidence="2">
    <location>
        <begin position="1"/>
        <end position="54"/>
    </location>
</feature>
<feature type="binding site" evidence="2">
    <location>
        <position position="13"/>
    </location>
    <ligand>
        <name>Zn(2+)</name>
        <dbReference type="ChEBI" id="CHEBI:29105"/>
    </ligand>
</feature>
<feature type="binding site" evidence="2">
    <location>
        <position position="16"/>
    </location>
    <ligand>
        <name>Zn(2+)</name>
        <dbReference type="ChEBI" id="CHEBI:29105"/>
    </ligand>
</feature>
<feature type="binding site" evidence="2">
    <location>
        <position position="35"/>
    </location>
    <ligand>
        <name>Zn(2+)</name>
        <dbReference type="ChEBI" id="CHEBI:29105"/>
    </ligand>
</feature>
<feature type="binding site" evidence="2">
    <location>
        <position position="38"/>
    </location>
    <ligand>
        <name>Zn(2+)</name>
        <dbReference type="ChEBI" id="CHEBI:29105"/>
    </ligand>
</feature>
<feature type="binding site" evidence="1">
    <location>
        <begin position="118"/>
        <end position="125"/>
    </location>
    <ligand>
        <name>ATP</name>
        <dbReference type="ChEBI" id="CHEBI:30616"/>
    </ligand>
</feature>
<gene>
    <name evidence="1" type="primary">clpX</name>
    <name type="ordered locus">LJ_1011</name>
</gene>
<organism>
    <name type="scientific">Lactobacillus johnsonii (strain CNCM I-12250 / La1 / NCC 533)</name>
    <dbReference type="NCBI Taxonomy" id="257314"/>
    <lineage>
        <taxon>Bacteria</taxon>
        <taxon>Bacillati</taxon>
        <taxon>Bacillota</taxon>
        <taxon>Bacilli</taxon>
        <taxon>Lactobacillales</taxon>
        <taxon>Lactobacillaceae</taxon>
        <taxon>Lactobacillus</taxon>
    </lineage>
</organism>
<sequence length="421" mass="46573">MANEITEQEEVKCSFCGKPQSQVKKIVAGNGVYICNECIDLSKKIIDDELKADSIKETKDLPKPMEIKKQLDEYVIGQDRAKKVLSVAVYNHYKRISQMDIDSTGTELQKSNIALIGPTGSGKTYLAQTLAKILNVPFAIADATTLTEAGYVGEDVENILLKLLQNADYDIERAQRGIIYIDEIDKISKKAENVSITRDVSGEGVQQSLLKILEGTIASVPPQGGRKHPQQQMIKIDTTNILFIVGGAFDGIENIVKNRLGKKTIGFGAENGLNQVDADDWQKNLTTGDLVKFGLIPEFIGRIPIIATLDKLSTEDLIRILTEPKNALVKQYKKLLSLDDVDLEFTDGALQAIADMAISRRMGARGLRSIVENSLMDVMYRTPSDDNIKEVQITKDVITKHAEPKITYKEDKAEKTSEATK</sequence>
<reference key="1">
    <citation type="journal article" date="2004" name="Proc. Natl. Acad. Sci. U.S.A.">
        <title>The genome sequence of the probiotic intestinal bacterium Lactobacillus johnsonii NCC 533.</title>
        <authorList>
            <person name="Pridmore R.D."/>
            <person name="Berger B."/>
            <person name="Desiere F."/>
            <person name="Vilanova D."/>
            <person name="Barretto C."/>
            <person name="Pittet A.-C."/>
            <person name="Zwahlen M.-C."/>
            <person name="Rouvet M."/>
            <person name="Altermann E."/>
            <person name="Barrangou R."/>
            <person name="Mollet B."/>
            <person name="Mercenier A."/>
            <person name="Klaenhammer T."/>
            <person name="Arigoni F."/>
            <person name="Schell M.A."/>
        </authorList>
    </citation>
    <scope>NUCLEOTIDE SEQUENCE [LARGE SCALE GENOMIC DNA]</scope>
    <source>
        <strain>CNCM I-1225 / La1 / NCC 533</strain>
    </source>
</reference>
<comment type="function">
    <text evidence="1">ATP-dependent specificity component of the Clp protease. It directs the protease to specific substrates. Can perform chaperone functions in the absence of ClpP.</text>
</comment>
<comment type="subunit">
    <text evidence="1">Component of the ClpX-ClpP complex. Forms a hexameric ring that, in the presence of ATP, binds to fourteen ClpP subunits assembled into a disk-like structure with a central cavity, resembling the structure of eukaryotic proteasomes.</text>
</comment>
<comment type="similarity">
    <text evidence="1">Belongs to the ClpX chaperone family.</text>
</comment>
<protein>
    <recommendedName>
        <fullName evidence="1">ATP-dependent Clp protease ATP-binding subunit ClpX</fullName>
    </recommendedName>
</protein>
<accession>Q74JU4</accession>
<evidence type="ECO:0000255" key="1">
    <source>
        <dbReference type="HAMAP-Rule" id="MF_00175"/>
    </source>
</evidence>
<evidence type="ECO:0000255" key="2">
    <source>
        <dbReference type="PROSITE-ProRule" id="PRU01250"/>
    </source>
</evidence>
<dbReference type="EMBL" id="AE017198">
    <property type="protein sequence ID" value="AAS08833.1"/>
    <property type="molecule type" value="Genomic_DNA"/>
</dbReference>
<dbReference type="RefSeq" id="WP_011161869.1">
    <property type="nucleotide sequence ID" value="NC_005362.1"/>
</dbReference>
<dbReference type="SMR" id="Q74JU4"/>
<dbReference type="KEGG" id="ljo:LJ_1011"/>
<dbReference type="PATRIC" id="fig|257314.6.peg.870"/>
<dbReference type="eggNOG" id="COG1219">
    <property type="taxonomic scope" value="Bacteria"/>
</dbReference>
<dbReference type="HOGENOM" id="CLU_014218_8_2_9"/>
<dbReference type="Proteomes" id="UP000000581">
    <property type="component" value="Chromosome"/>
</dbReference>
<dbReference type="GO" id="GO:0009376">
    <property type="term" value="C:HslUV protease complex"/>
    <property type="evidence" value="ECO:0007669"/>
    <property type="project" value="TreeGrafter"/>
</dbReference>
<dbReference type="GO" id="GO:0005524">
    <property type="term" value="F:ATP binding"/>
    <property type="evidence" value="ECO:0007669"/>
    <property type="project" value="UniProtKB-UniRule"/>
</dbReference>
<dbReference type="GO" id="GO:0016887">
    <property type="term" value="F:ATP hydrolysis activity"/>
    <property type="evidence" value="ECO:0007669"/>
    <property type="project" value="InterPro"/>
</dbReference>
<dbReference type="GO" id="GO:0140662">
    <property type="term" value="F:ATP-dependent protein folding chaperone"/>
    <property type="evidence" value="ECO:0007669"/>
    <property type="project" value="InterPro"/>
</dbReference>
<dbReference type="GO" id="GO:0046983">
    <property type="term" value="F:protein dimerization activity"/>
    <property type="evidence" value="ECO:0007669"/>
    <property type="project" value="InterPro"/>
</dbReference>
<dbReference type="GO" id="GO:0051082">
    <property type="term" value="F:unfolded protein binding"/>
    <property type="evidence" value="ECO:0007669"/>
    <property type="project" value="UniProtKB-UniRule"/>
</dbReference>
<dbReference type="GO" id="GO:0008270">
    <property type="term" value="F:zinc ion binding"/>
    <property type="evidence" value="ECO:0007669"/>
    <property type="project" value="InterPro"/>
</dbReference>
<dbReference type="GO" id="GO:0051301">
    <property type="term" value="P:cell division"/>
    <property type="evidence" value="ECO:0007669"/>
    <property type="project" value="TreeGrafter"/>
</dbReference>
<dbReference type="GO" id="GO:0051603">
    <property type="term" value="P:proteolysis involved in protein catabolic process"/>
    <property type="evidence" value="ECO:0007669"/>
    <property type="project" value="TreeGrafter"/>
</dbReference>
<dbReference type="CDD" id="cd19497">
    <property type="entry name" value="RecA-like_ClpX"/>
    <property type="match status" value="1"/>
</dbReference>
<dbReference type="FunFam" id="1.10.8.60:FF:000002">
    <property type="entry name" value="ATP-dependent Clp protease ATP-binding subunit ClpX"/>
    <property type="match status" value="1"/>
</dbReference>
<dbReference type="FunFam" id="3.40.50.300:FF:000005">
    <property type="entry name" value="ATP-dependent Clp protease ATP-binding subunit ClpX"/>
    <property type="match status" value="1"/>
</dbReference>
<dbReference type="Gene3D" id="1.10.8.60">
    <property type="match status" value="1"/>
</dbReference>
<dbReference type="Gene3D" id="6.20.220.10">
    <property type="entry name" value="ClpX chaperone, C4-type zinc finger domain"/>
    <property type="match status" value="1"/>
</dbReference>
<dbReference type="Gene3D" id="3.40.50.300">
    <property type="entry name" value="P-loop containing nucleotide triphosphate hydrolases"/>
    <property type="match status" value="1"/>
</dbReference>
<dbReference type="HAMAP" id="MF_00175">
    <property type="entry name" value="ClpX"/>
    <property type="match status" value="1"/>
</dbReference>
<dbReference type="InterPro" id="IPR003593">
    <property type="entry name" value="AAA+_ATPase"/>
</dbReference>
<dbReference type="InterPro" id="IPR050052">
    <property type="entry name" value="ATP-dep_Clp_protease_ClpX"/>
</dbReference>
<dbReference type="InterPro" id="IPR003959">
    <property type="entry name" value="ATPase_AAA_core"/>
</dbReference>
<dbReference type="InterPro" id="IPR019489">
    <property type="entry name" value="Clp_ATPase_C"/>
</dbReference>
<dbReference type="InterPro" id="IPR004487">
    <property type="entry name" value="Clp_protease_ATP-bd_su_ClpX"/>
</dbReference>
<dbReference type="InterPro" id="IPR046425">
    <property type="entry name" value="ClpX_bact"/>
</dbReference>
<dbReference type="InterPro" id="IPR027417">
    <property type="entry name" value="P-loop_NTPase"/>
</dbReference>
<dbReference type="InterPro" id="IPR010603">
    <property type="entry name" value="Znf_CppX_C4"/>
</dbReference>
<dbReference type="InterPro" id="IPR038366">
    <property type="entry name" value="Znf_CppX_C4_sf"/>
</dbReference>
<dbReference type="NCBIfam" id="TIGR00382">
    <property type="entry name" value="clpX"/>
    <property type="match status" value="1"/>
</dbReference>
<dbReference type="NCBIfam" id="NF003745">
    <property type="entry name" value="PRK05342.1"/>
    <property type="match status" value="1"/>
</dbReference>
<dbReference type="PANTHER" id="PTHR48102:SF7">
    <property type="entry name" value="ATP-DEPENDENT CLP PROTEASE ATP-BINDING SUBUNIT CLPX-LIKE, MITOCHONDRIAL"/>
    <property type="match status" value="1"/>
</dbReference>
<dbReference type="PANTHER" id="PTHR48102">
    <property type="entry name" value="ATP-DEPENDENT CLP PROTEASE ATP-BINDING SUBUNIT CLPX-LIKE, MITOCHONDRIAL-RELATED"/>
    <property type="match status" value="1"/>
</dbReference>
<dbReference type="Pfam" id="PF07724">
    <property type="entry name" value="AAA_2"/>
    <property type="match status" value="1"/>
</dbReference>
<dbReference type="Pfam" id="PF10431">
    <property type="entry name" value="ClpB_D2-small"/>
    <property type="match status" value="1"/>
</dbReference>
<dbReference type="Pfam" id="PF06689">
    <property type="entry name" value="zf-C4_ClpX"/>
    <property type="match status" value="1"/>
</dbReference>
<dbReference type="SMART" id="SM00382">
    <property type="entry name" value="AAA"/>
    <property type="match status" value="1"/>
</dbReference>
<dbReference type="SMART" id="SM01086">
    <property type="entry name" value="ClpB_D2-small"/>
    <property type="match status" value="1"/>
</dbReference>
<dbReference type="SMART" id="SM00994">
    <property type="entry name" value="zf-C4_ClpX"/>
    <property type="match status" value="1"/>
</dbReference>
<dbReference type="SUPFAM" id="SSF57716">
    <property type="entry name" value="Glucocorticoid receptor-like (DNA-binding domain)"/>
    <property type="match status" value="1"/>
</dbReference>
<dbReference type="SUPFAM" id="SSF52540">
    <property type="entry name" value="P-loop containing nucleoside triphosphate hydrolases"/>
    <property type="match status" value="1"/>
</dbReference>
<dbReference type="PROSITE" id="PS51902">
    <property type="entry name" value="CLPX_ZB"/>
    <property type="match status" value="1"/>
</dbReference>
<keyword id="KW-0067">ATP-binding</keyword>
<keyword id="KW-0143">Chaperone</keyword>
<keyword id="KW-0479">Metal-binding</keyword>
<keyword id="KW-0547">Nucleotide-binding</keyword>
<keyword id="KW-0862">Zinc</keyword>
<name>CLPX_LACJO</name>